<gene>
    <name evidence="1" type="primary">nuoD</name>
    <name type="ordered locus">Bcep18194_A5574</name>
</gene>
<name>NUOD_BURL3</name>
<feature type="chain" id="PRO_0000371839" description="NADH-quinone oxidoreductase subunit D">
    <location>
        <begin position="1"/>
        <end position="417"/>
    </location>
</feature>
<protein>
    <recommendedName>
        <fullName evidence="1">NADH-quinone oxidoreductase subunit D</fullName>
        <ecNumber evidence="1">7.1.1.-</ecNumber>
    </recommendedName>
    <alternativeName>
        <fullName evidence="1">NADH dehydrogenase I subunit D</fullName>
    </alternativeName>
    <alternativeName>
        <fullName evidence="1">NDH-1 subunit D</fullName>
    </alternativeName>
</protein>
<dbReference type="EC" id="7.1.1.-" evidence="1"/>
<dbReference type="EMBL" id="CP000151">
    <property type="protein sequence ID" value="ABB09168.1"/>
    <property type="molecule type" value="Genomic_DNA"/>
</dbReference>
<dbReference type="RefSeq" id="WP_011352698.1">
    <property type="nucleotide sequence ID" value="NC_007510.1"/>
</dbReference>
<dbReference type="SMR" id="Q39EE8"/>
<dbReference type="GeneID" id="45095460"/>
<dbReference type="KEGG" id="bur:Bcep18194_A5574"/>
<dbReference type="PATRIC" id="fig|482957.22.peg.2539"/>
<dbReference type="HOGENOM" id="CLU_015134_1_1_4"/>
<dbReference type="Proteomes" id="UP000002705">
    <property type="component" value="Chromosome 1"/>
</dbReference>
<dbReference type="GO" id="GO:0005886">
    <property type="term" value="C:plasma membrane"/>
    <property type="evidence" value="ECO:0007669"/>
    <property type="project" value="UniProtKB-SubCell"/>
</dbReference>
<dbReference type="GO" id="GO:0051287">
    <property type="term" value="F:NAD binding"/>
    <property type="evidence" value="ECO:0007669"/>
    <property type="project" value="InterPro"/>
</dbReference>
<dbReference type="GO" id="GO:0050136">
    <property type="term" value="F:NADH:ubiquinone reductase (non-electrogenic) activity"/>
    <property type="evidence" value="ECO:0007669"/>
    <property type="project" value="UniProtKB-UniRule"/>
</dbReference>
<dbReference type="GO" id="GO:0048038">
    <property type="term" value="F:quinone binding"/>
    <property type="evidence" value="ECO:0007669"/>
    <property type="project" value="UniProtKB-KW"/>
</dbReference>
<dbReference type="FunFam" id="1.10.645.10:FF:000005">
    <property type="entry name" value="NADH-quinone oxidoreductase subunit D"/>
    <property type="match status" value="1"/>
</dbReference>
<dbReference type="Gene3D" id="1.10.645.10">
    <property type="entry name" value="Cytochrome-c3 Hydrogenase, chain B"/>
    <property type="match status" value="1"/>
</dbReference>
<dbReference type="HAMAP" id="MF_01358">
    <property type="entry name" value="NDH1_NuoD"/>
    <property type="match status" value="1"/>
</dbReference>
<dbReference type="InterPro" id="IPR001135">
    <property type="entry name" value="NADH_Q_OxRdtase_suD"/>
</dbReference>
<dbReference type="InterPro" id="IPR014029">
    <property type="entry name" value="NADH_UbQ_OxRdtase_49kDa_CS"/>
</dbReference>
<dbReference type="InterPro" id="IPR022885">
    <property type="entry name" value="NDH1_su_D/H"/>
</dbReference>
<dbReference type="InterPro" id="IPR029014">
    <property type="entry name" value="NiFe-Hase_large"/>
</dbReference>
<dbReference type="NCBIfam" id="TIGR01962">
    <property type="entry name" value="NuoD"/>
    <property type="match status" value="1"/>
</dbReference>
<dbReference type="NCBIfam" id="NF004739">
    <property type="entry name" value="PRK06075.1"/>
    <property type="match status" value="1"/>
</dbReference>
<dbReference type="PANTHER" id="PTHR11993:SF10">
    <property type="entry name" value="NADH DEHYDROGENASE [UBIQUINONE] IRON-SULFUR PROTEIN 2, MITOCHONDRIAL"/>
    <property type="match status" value="1"/>
</dbReference>
<dbReference type="PANTHER" id="PTHR11993">
    <property type="entry name" value="NADH-UBIQUINONE OXIDOREDUCTASE 49 KDA SUBUNIT"/>
    <property type="match status" value="1"/>
</dbReference>
<dbReference type="Pfam" id="PF00346">
    <property type="entry name" value="Complex1_49kDa"/>
    <property type="match status" value="1"/>
</dbReference>
<dbReference type="SUPFAM" id="SSF56762">
    <property type="entry name" value="HydB/Nqo4-like"/>
    <property type="match status" value="1"/>
</dbReference>
<dbReference type="PROSITE" id="PS00535">
    <property type="entry name" value="COMPLEX1_49K"/>
    <property type="match status" value="1"/>
</dbReference>
<proteinExistence type="inferred from homology"/>
<reference key="1">
    <citation type="submission" date="2005-10" db="EMBL/GenBank/DDBJ databases">
        <title>Complete sequence of chromosome 1 of Burkholderia sp. 383.</title>
        <authorList>
            <consortium name="US DOE Joint Genome Institute"/>
            <person name="Copeland A."/>
            <person name="Lucas S."/>
            <person name="Lapidus A."/>
            <person name="Barry K."/>
            <person name="Detter J.C."/>
            <person name="Glavina T."/>
            <person name="Hammon N."/>
            <person name="Israni S."/>
            <person name="Pitluck S."/>
            <person name="Chain P."/>
            <person name="Malfatti S."/>
            <person name="Shin M."/>
            <person name="Vergez L."/>
            <person name="Schmutz J."/>
            <person name="Larimer F."/>
            <person name="Land M."/>
            <person name="Kyrpides N."/>
            <person name="Lykidis A."/>
            <person name="Richardson P."/>
        </authorList>
    </citation>
    <scope>NUCLEOTIDE SEQUENCE [LARGE SCALE GENOMIC DNA]</scope>
    <source>
        <strain>ATCC 17760 / DSM 23089 / LMG 22485 / NCIMB 9086 / R18194 / 383</strain>
    </source>
</reference>
<sequence>MAEIKNYTLNFGPQHPAAHGVLRLVLELDGEVIQRADPHIGLLHRATEKLAESKTFIQSVPYMDRLDYVSMMVNEHGYVLAIEKLLGIEVPERAQYIRVLFDEITRVLNHLMWIGAHALDVGAMAVFLYAFREREDLMDVYEAVSGARMHAAYYRPGGVYRDLPDAMPQYKASKIRNEKALAKMNEARSGSVLDFIDDFFARFPKCVDEYETLLTDNRIWKQRLVGIGVVSPERALQMGLTGPMLRGSGIAWDLRKKQPYEVYDRMDFDVPVGVNGDCYDRYLVRVEEMRQSIRIAKQCIEWLRKNPGPVMTDNHKVAPPSRVGMKTNMEDLIHHFKLFTEGFHVPEGEAYAAVEHPKGEFGIYLVSDGANKPYRLKIRAPGFAHLASLDEMARGHMIADAVTIIGTQDIVFGEIDR</sequence>
<comment type="function">
    <text evidence="1">NDH-1 shuttles electrons from NADH, via FMN and iron-sulfur (Fe-S) centers, to quinones in the respiratory chain. The immediate electron acceptor for the enzyme in this species is believed to be ubiquinone. Couples the redox reaction to proton translocation (for every two electrons transferred, four hydrogen ions are translocated across the cytoplasmic membrane), and thus conserves the redox energy in a proton gradient.</text>
</comment>
<comment type="catalytic activity">
    <reaction evidence="1">
        <text>a quinone + NADH + 5 H(+)(in) = a quinol + NAD(+) + 4 H(+)(out)</text>
        <dbReference type="Rhea" id="RHEA:57888"/>
        <dbReference type="ChEBI" id="CHEBI:15378"/>
        <dbReference type="ChEBI" id="CHEBI:24646"/>
        <dbReference type="ChEBI" id="CHEBI:57540"/>
        <dbReference type="ChEBI" id="CHEBI:57945"/>
        <dbReference type="ChEBI" id="CHEBI:132124"/>
    </reaction>
</comment>
<comment type="subunit">
    <text evidence="1">NDH-1 is composed of 14 different subunits. Subunits NuoB, C, D, E, F, and G constitute the peripheral sector of the complex.</text>
</comment>
<comment type="subcellular location">
    <subcellularLocation>
        <location evidence="1">Cell inner membrane</location>
        <topology evidence="1">Peripheral membrane protein</topology>
        <orientation evidence="1">Cytoplasmic side</orientation>
    </subcellularLocation>
</comment>
<comment type="similarity">
    <text evidence="1">Belongs to the complex I 49 kDa subunit family.</text>
</comment>
<organism>
    <name type="scientific">Burkholderia lata (strain ATCC 17760 / DSM 23089 / LMG 22485 / NCIMB 9086 / R18194 / 383)</name>
    <dbReference type="NCBI Taxonomy" id="482957"/>
    <lineage>
        <taxon>Bacteria</taxon>
        <taxon>Pseudomonadati</taxon>
        <taxon>Pseudomonadota</taxon>
        <taxon>Betaproteobacteria</taxon>
        <taxon>Burkholderiales</taxon>
        <taxon>Burkholderiaceae</taxon>
        <taxon>Burkholderia</taxon>
        <taxon>Burkholderia cepacia complex</taxon>
    </lineage>
</organism>
<accession>Q39EE8</accession>
<keyword id="KW-0997">Cell inner membrane</keyword>
<keyword id="KW-1003">Cell membrane</keyword>
<keyword id="KW-0472">Membrane</keyword>
<keyword id="KW-0520">NAD</keyword>
<keyword id="KW-0874">Quinone</keyword>
<keyword id="KW-1278">Translocase</keyword>
<keyword id="KW-0813">Transport</keyword>
<keyword id="KW-0830">Ubiquinone</keyword>
<evidence type="ECO:0000255" key="1">
    <source>
        <dbReference type="HAMAP-Rule" id="MF_01358"/>
    </source>
</evidence>